<proteinExistence type="inferred from homology"/>
<dbReference type="EC" id="4.6.1.12" evidence="1"/>
<dbReference type="EMBL" id="CP000388">
    <property type="protein sequence ID" value="ABG42358.1"/>
    <property type="molecule type" value="Genomic_DNA"/>
</dbReference>
<dbReference type="RefSeq" id="WP_011576566.1">
    <property type="nucleotide sequence ID" value="NC_008228.1"/>
</dbReference>
<dbReference type="SMR" id="Q15P30"/>
<dbReference type="STRING" id="342610.Patl_3858"/>
<dbReference type="KEGG" id="pat:Patl_3858"/>
<dbReference type="eggNOG" id="COG0245">
    <property type="taxonomic scope" value="Bacteria"/>
</dbReference>
<dbReference type="HOGENOM" id="CLU_084630_2_0_6"/>
<dbReference type="OrthoDB" id="9804336at2"/>
<dbReference type="UniPathway" id="UPA00056">
    <property type="reaction ID" value="UER00095"/>
</dbReference>
<dbReference type="Proteomes" id="UP000001981">
    <property type="component" value="Chromosome"/>
</dbReference>
<dbReference type="GO" id="GO:0008685">
    <property type="term" value="F:2-C-methyl-D-erythritol 2,4-cyclodiphosphate synthase activity"/>
    <property type="evidence" value="ECO:0007669"/>
    <property type="project" value="UniProtKB-UniRule"/>
</dbReference>
<dbReference type="GO" id="GO:0046872">
    <property type="term" value="F:metal ion binding"/>
    <property type="evidence" value="ECO:0007669"/>
    <property type="project" value="UniProtKB-KW"/>
</dbReference>
<dbReference type="GO" id="GO:0019288">
    <property type="term" value="P:isopentenyl diphosphate biosynthetic process, methylerythritol 4-phosphate pathway"/>
    <property type="evidence" value="ECO:0007669"/>
    <property type="project" value="UniProtKB-UniRule"/>
</dbReference>
<dbReference type="GO" id="GO:0016114">
    <property type="term" value="P:terpenoid biosynthetic process"/>
    <property type="evidence" value="ECO:0007669"/>
    <property type="project" value="InterPro"/>
</dbReference>
<dbReference type="CDD" id="cd00554">
    <property type="entry name" value="MECDP_synthase"/>
    <property type="match status" value="1"/>
</dbReference>
<dbReference type="FunFam" id="3.30.1330.50:FF:000001">
    <property type="entry name" value="2-C-methyl-D-erythritol 2,4-cyclodiphosphate synthase"/>
    <property type="match status" value="1"/>
</dbReference>
<dbReference type="Gene3D" id="3.30.1330.50">
    <property type="entry name" value="2-C-methyl-D-erythritol 2,4-cyclodiphosphate synthase"/>
    <property type="match status" value="1"/>
</dbReference>
<dbReference type="HAMAP" id="MF_00107">
    <property type="entry name" value="IspF"/>
    <property type="match status" value="1"/>
</dbReference>
<dbReference type="InterPro" id="IPR003526">
    <property type="entry name" value="MECDP_synthase"/>
</dbReference>
<dbReference type="InterPro" id="IPR020555">
    <property type="entry name" value="MECDP_synthase_CS"/>
</dbReference>
<dbReference type="InterPro" id="IPR036571">
    <property type="entry name" value="MECDP_synthase_sf"/>
</dbReference>
<dbReference type="NCBIfam" id="TIGR00151">
    <property type="entry name" value="ispF"/>
    <property type="match status" value="1"/>
</dbReference>
<dbReference type="PANTHER" id="PTHR43181">
    <property type="entry name" value="2-C-METHYL-D-ERYTHRITOL 2,4-CYCLODIPHOSPHATE SYNTHASE, CHLOROPLASTIC"/>
    <property type="match status" value="1"/>
</dbReference>
<dbReference type="PANTHER" id="PTHR43181:SF1">
    <property type="entry name" value="2-C-METHYL-D-ERYTHRITOL 2,4-CYCLODIPHOSPHATE SYNTHASE, CHLOROPLASTIC"/>
    <property type="match status" value="1"/>
</dbReference>
<dbReference type="Pfam" id="PF02542">
    <property type="entry name" value="YgbB"/>
    <property type="match status" value="1"/>
</dbReference>
<dbReference type="SUPFAM" id="SSF69765">
    <property type="entry name" value="IpsF-like"/>
    <property type="match status" value="1"/>
</dbReference>
<dbReference type="PROSITE" id="PS01350">
    <property type="entry name" value="ISPF"/>
    <property type="match status" value="1"/>
</dbReference>
<protein>
    <recommendedName>
        <fullName evidence="1">2-C-methyl-D-erythritol 2,4-cyclodiphosphate synthase</fullName>
        <shortName evidence="1">MECDP-synthase</shortName>
        <shortName evidence="1">MECPP-synthase</shortName>
        <shortName evidence="1">MECPS</shortName>
        <ecNumber evidence="1">4.6.1.12</ecNumber>
    </recommendedName>
</protein>
<feature type="chain" id="PRO_1000022859" description="2-C-methyl-D-erythritol 2,4-cyclodiphosphate synthase">
    <location>
        <begin position="1"/>
        <end position="162"/>
    </location>
</feature>
<feature type="binding site" evidence="1">
    <location>
        <begin position="10"/>
        <end position="12"/>
    </location>
    <ligand>
        <name>4-CDP-2-C-methyl-D-erythritol 2-phosphate</name>
        <dbReference type="ChEBI" id="CHEBI:57919"/>
    </ligand>
</feature>
<feature type="binding site" evidence="1">
    <location>
        <position position="10"/>
    </location>
    <ligand>
        <name>a divalent metal cation</name>
        <dbReference type="ChEBI" id="CHEBI:60240"/>
    </ligand>
</feature>
<feature type="binding site" evidence="1">
    <location>
        <position position="12"/>
    </location>
    <ligand>
        <name>a divalent metal cation</name>
        <dbReference type="ChEBI" id="CHEBI:60240"/>
    </ligand>
</feature>
<feature type="binding site" evidence="1">
    <location>
        <begin position="36"/>
        <end position="37"/>
    </location>
    <ligand>
        <name>4-CDP-2-C-methyl-D-erythritol 2-phosphate</name>
        <dbReference type="ChEBI" id="CHEBI:57919"/>
    </ligand>
</feature>
<feature type="binding site" evidence="1">
    <location>
        <position position="44"/>
    </location>
    <ligand>
        <name>a divalent metal cation</name>
        <dbReference type="ChEBI" id="CHEBI:60240"/>
    </ligand>
</feature>
<feature type="binding site" evidence="1">
    <location>
        <begin position="58"/>
        <end position="60"/>
    </location>
    <ligand>
        <name>4-CDP-2-C-methyl-D-erythritol 2-phosphate</name>
        <dbReference type="ChEBI" id="CHEBI:57919"/>
    </ligand>
</feature>
<feature type="binding site" evidence="1">
    <location>
        <begin position="63"/>
        <end position="67"/>
    </location>
    <ligand>
        <name>4-CDP-2-C-methyl-D-erythritol 2-phosphate</name>
        <dbReference type="ChEBI" id="CHEBI:57919"/>
    </ligand>
</feature>
<feature type="binding site" evidence="1">
    <location>
        <begin position="102"/>
        <end position="108"/>
    </location>
    <ligand>
        <name>4-CDP-2-C-methyl-D-erythritol 2-phosphate</name>
        <dbReference type="ChEBI" id="CHEBI:57919"/>
    </ligand>
</feature>
<feature type="binding site" evidence="1">
    <location>
        <begin position="134"/>
        <end position="137"/>
    </location>
    <ligand>
        <name>4-CDP-2-C-methyl-D-erythritol 2-phosphate</name>
        <dbReference type="ChEBI" id="CHEBI:57919"/>
    </ligand>
</feature>
<feature type="binding site" evidence="1">
    <location>
        <position position="141"/>
    </location>
    <ligand>
        <name>4-CDP-2-C-methyl-D-erythritol 2-phosphate</name>
        <dbReference type="ChEBI" id="CHEBI:57919"/>
    </ligand>
</feature>
<feature type="binding site" evidence="1">
    <location>
        <position position="144"/>
    </location>
    <ligand>
        <name>4-CDP-2-C-methyl-D-erythritol 2-phosphate</name>
        <dbReference type="ChEBI" id="CHEBI:57919"/>
    </ligand>
</feature>
<feature type="site" description="Transition state stabilizer" evidence="1">
    <location>
        <position position="36"/>
    </location>
</feature>
<feature type="site" description="Transition state stabilizer" evidence="1">
    <location>
        <position position="135"/>
    </location>
</feature>
<gene>
    <name evidence="1" type="primary">ispF</name>
    <name type="ordered locus">Patl_3858</name>
</gene>
<evidence type="ECO:0000255" key="1">
    <source>
        <dbReference type="HAMAP-Rule" id="MF_00107"/>
    </source>
</evidence>
<organism>
    <name type="scientific">Pseudoalteromonas atlantica (strain T6c / ATCC BAA-1087)</name>
    <dbReference type="NCBI Taxonomy" id="3042615"/>
    <lineage>
        <taxon>Bacteria</taxon>
        <taxon>Pseudomonadati</taxon>
        <taxon>Pseudomonadota</taxon>
        <taxon>Gammaproteobacteria</taxon>
        <taxon>Alteromonadales</taxon>
        <taxon>Alteromonadaceae</taxon>
        <taxon>Paraglaciecola</taxon>
    </lineage>
</organism>
<accession>Q15P30</accession>
<name>ISPF_PSEA6</name>
<reference key="1">
    <citation type="submission" date="2006-06" db="EMBL/GenBank/DDBJ databases">
        <title>Complete sequence of Pseudoalteromonas atlantica T6c.</title>
        <authorList>
            <consortium name="US DOE Joint Genome Institute"/>
            <person name="Copeland A."/>
            <person name="Lucas S."/>
            <person name="Lapidus A."/>
            <person name="Barry K."/>
            <person name="Detter J.C."/>
            <person name="Glavina del Rio T."/>
            <person name="Hammon N."/>
            <person name="Israni S."/>
            <person name="Dalin E."/>
            <person name="Tice H."/>
            <person name="Pitluck S."/>
            <person name="Saunders E."/>
            <person name="Brettin T."/>
            <person name="Bruce D."/>
            <person name="Han C."/>
            <person name="Tapia R."/>
            <person name="Gilna P."/>
            <person name="Schmutz J."/>
            <person name="Larimer F."/>
            <person name="Land M."/>
            <person name="Hauser L."/>
            <person name="Kyrpides N."/>
            <person name="Kim E."/>
            <person name="Karls A.C."/>
            <person name="Bartlett D."/>
            <person name="Higgins B.P."/>
            <person name="Richardson P."/>
        </authorList>
    </citation>
    <scope>NUCLEOTIDE SEQUENCE [LARGE SCALE GENOMIC DNA]</scope>
    <source>
        <strain>T6c / ATCC BAA-1087</strain>
    </source>
</reference>
<comment type="function">
    <text evidence="1">Involved in the biosynthesis of isopentenyl diphosphate (IPP) and dimethylallyl diphosphate (DMAPP), two major building blocks of isoprenoid compounds. Catalyzes the conversion of 4-diphosphocytidyl-2-C-methyl-D-erythritol 2-phosphate (CDP-ME2P) to 2-C-methyl-D-erythritol 2,4-cyclodiphosphate (ME-CPP) with a corresponding release of cytidine 5-monophosphate (CMP).</text>
</comment>
<comment type="catalytic activity">
    <reaction evidence="1">
        <text>4-CDP-2-C-methyl-D-erythritol 2-phosphate = 2-C-methyl-D-erythritol 2,4-cyclic diphosphate + CMP</text>
        <dbReference type="Rhea" id="RHEA:23864"/>
        <dbReference type="ChEBI" id="CHEBI:57919"/>
        <dbReference type="ChEBI" id="CHEBI:58483"/>
        <dbReference type="ChEBI" id="CHEBI:60377"/>
        <dbReference type="EC" id="4.6.1.12"/>
    </reaction>
</comment>
<comment type="cofactor">
    <cofactor evidence="1">
        <name>a divalent metal cation</name>
        <dbReference type="ChEBI" id="CHEBI:60240"/>
    </cofactor>
    <text evidence="1">Binds 1 divalent metal cation per subunit.</text>
</comment>
<comment type="pathway">
    <text evidence="1">Isoprenoid biosynthesis; isopentenyl diphosphate biosynthesis via DXP pathway; isopentenyl diphosphate from 1-deoxy-D-xylulose 5-phosphate: step 4/6.</text>
</comment>
<comment type="subunit">
    <text evidence="1">Homotrimer.</text>
</comment>
<comment type="similarity">
    <text evidence="1">Belongs to the IspF family.</text>
</comment>
<keyword id="KW-0414">Isoprene biosynthesis</keyword>
<keyword id="KW-0456">Lyase</keyword>
<keyword id="KW-0479">Metal-binding</keyword>
<sequence length="162" mass="17327">MNLRIGHGYDVHKFGDSGPITICGVKIDYEQGLLAHSDGDVALHALCDALLGALALGDIGGHFPDTDAQFKGADSRALLRHVMTLVNEHGYEIGNLDLTIVAQAPKMAPHIQAMRENIRQDVNAQLNQVNVKATTTEKLGFAGRKEGIACYAVVLLNKSIAA</sequence>